<proteinExistence type="evidence at protein level"/>
<accession>P08065</accession>
<dbReference type="EC" id="1.3.5.1" evidence="1"/>
<dbReference type="EMBL" id="M13470">
    <property type="protein sequence ID" value="AAA22746.1"/>
    <property type="molecule type" value="Genomic_DNA"/>
</dbReference>
<dbReference type="EMBL" id="Z75208">
    <property type="protein sequence ID" value="CAA99547.1"/>
    <property type="molecule type" value="Genomic_DNA"/>
</dbReference>
<dbReference type="EMBL" id="AL009126">
    <property type="protein sequence ID" value="CAB14804.2"/>
    <property type="molecule type" value="Genomic_DNA"/>
</dbReference>
<dbReference type="PIR" id="A27763">
    <property type="entry name" value="A27763"/>
</dbReference>
<dbReference type="RefSeq" id="NP_390722.2">
    <property type="nucleotide sequence ID" value="NC_000964.3"/>
</dbReference>
<dbReference type="RefSeq" id="WP_003229567.1">
    <property type="nucleotide sequence ID" value="NZ_OZ025638.1"/>
</dbReference>
<dbReference type="SMR" id="P08065"/>
<dbReference type="FunCoup" id="P08065">
    <property type="interactions" value="607"/>
</dbReference>
<dbReference type="IntAct" id="P08065">
    <property type="interactions" value="1"/>
</dbReference>
<dbReference type="MINT" id="P08065"/>
<dbReference type="STRING" id="224308.BSU28440"/>
<dbReference type="jPOST" id="P08065"/>
<dbReference type="PaxDb" id="224308-BSU28440"/>
<dbReference type="EnsemblBacteria" id="CAB14804">
    <property type="protein sequence ID" value="CAB14804"/>
    <property type="gene ID" value="BSU_28440"/>
</dbReference>
<dbReference type="GeneID" id="937600"/>
<dbReference type="KEGG" id="bsu:BSU28440"/>
<dbReference type="PATRIC" id="fig|224308.179.peg.3089"/>
<dbReference type="eggNOG" id="COG1053">
    <property type="taxonomic scope" value="Bacteria"/>
</dbReference>
<dbReference type="InParanoid" id="P08065"/>
<dbReference type="OrthoDB" id="9806724at2"/>
<dbReference type="PhylomeDB" id="P08065"/>
<dbReference type="BioCyc" id="BSUB:BSU28440-MONOMER"/>
<dbReference type="BioCyc" id="MetaCyc:BSU28440-MONOMER"/>
<dbReference type="UniPathway" id="UPA00223">
    <property type="reaction ID" value="UER01005"/>
</dbReference>
<dbReference type="Proteomes" id="UP000001570">
    <property type="component" value="Chromosome"/>
</dbReference>
<dbReference type="GO" id="GO:0045121">
    <property type="term" value="C:membrane raft"/>
    <property type="evidence" value="ECO:0007669"/>
    <property type="project" value="UniProtKB-SubCell"/>
</dbReference>
<dbReference type="GO" id="GO:0005886">
    <property type="term" value="C:plasma membrane"/>
    <property type="evidence" value="ECO:0000318"/>
    <property type="project" value="GO_Central"/>
</dbReference>
<dbReference type="GO" id="GO:0009055">
    <property type="term" value="F:electron transfer activity"/>
    <property type="evidence" value="ECO:0000318"/>
    <property type="project" value="GO_Central"/>
</dbReference>
<dbReference type="GO" id="GO:0050660">
    <property type="term" value="F:flavin adenine dinucleotide binding"/>
    <property type="evidence" value="ECO:0000318"/>
    <property type="project" value="GO_Central"/>
</dbReference>
<dbReference type="GO" id="GO:0033765">
    <property type="term" value="F:steroid dehydrogenase activity, acting on the CH-CH group of donors"/>
    <property type="evidence" value="ECO:0007669"/>
    <property type="project" value="UniProtKB-ARBA"/>
</dbReference>
<dbReference type="GO" id="GO:0008177">
    <property type="term" value="F:succinate dehydrogenase (quinone) activity"/>
    <property type="evidence" value="ECO:0007669"/>
    <property type="project" value="UniProtKB-EC"/>
</dbReference>
<dbReference type="GO" id="GO:0000104">
    <property type="term" value="F:succinate dehydrogenase activity"/>
    <property type="evidence" value="ECO:0000318"/>
    <property type="project" value="GO_Central"/>
</dbReference>
<dbReference type="GO" id="GO:0009061">
    <property type="term" value="P:anaerobic respiration"/>
    <property type="evidence" value="ECO:0000318"/>
    <property type="project" value="GO_Central"/>
</dbReference>
<dbReference type="GO" id="GO:0006099">
    <property type="term" value="P:tricarboxylic acid cycle"/>
    <property type="evidence" value="ECO:0007669"/>
    <property type="project" value="UniProtKB-UniPathway"/>
</dbReference>
<dbReference type="FunFam" id="1.20.58.100:FF:000004">
    <property type="entry name" value="Succinate dehydrogenase flavoprotein subunit"/>
    <property type="match status" value="1"/>
</dbReference>
<dbReference type="FunFam" id="3.50.50.60:FF:000009">
    <property type="entry name" value="Succinate dehydrogenase flavoprotein subunit"/>
    <property type="match status" value="1"/>
</dbReference>
<dbReference type="FunFam" id="3.90.700.10:FF:000004">
    <property type="entry name" value="Succinate dehydrogenase flavoprotein subunit"/>
    <property type="match status" value="1"/>
</dbReference>
<dbReference type="Gene3D" id="3.10.20.820">
    <property type="match status" value="1"/>
</dbReference>
<dbReference type="Gene3D" id="3.50.50.60">
    <property type="entry name" value="FAD/NAD(P)-binding domain"/>
    <property type="match status" value="1"/>
</dbReference>
<dbReference type="Gene3D" id="1.20.58.100">
    <property type="entry name" value="Fumarate reductase/succinate dehydrogenase flavoprotein-like, C-terminal domain"/>
    <property type="match status" value="1"/>
</dbReference>
<dbReference type="Gene3D" id="3.90.700.10">
    <property type="entry name" value="Succinate dehydrogenase/fumarate reductase flavoprotein, catalytic domain"/>
    <property type="match status" value="1"/>
</dbReference>
<dbReference type="InterPro" id="IPR003953">
    <property type="entry name" value="FAD-dep_OxRdtase_2_FAD-bd"/>
</dbReference>
<dbReference type="InterPro" id="IPR036188">
    <property type="entry name" value="FAD/NAD-bd_sf"/>
</dbReference>
<dbReference type="InterPro" id="IPR003952">
    <property type="entry name" value="FRD_SDH_FAD_BS"/>
</dbReference>
<dbReference type="InterPro" id="IPR037099">
    <property type="entry name" value="Fum_R/Succ_DH_flav-like_C_sf"/>
</dbReference>
<dbReference type="InterPro" id="IPR015939">
    <property type="entry name" value="Fum_Rdtase/Succ_DH_flav-like_C"/>
</dbReference>
<dbReference type="InterPro" id="IPR030664">
    <property type="entry name" value="SdhA/FrdA/AprA"/>
</dbReference>
<dbReference type="InterPro" id="IPR011280">
    <property type="entry name" value="Succ_DH/Fum_Rdt_flav_su"/>
</dbReference>
<dbReference type="InterPro" id="IPR027477">
    <property type="entry name" value="Succ_DH/fumarate_Rdtase_cat_sf"/>
</dbReference>
<dbReference type="NCBIfam" id="NF006392">
    <property type="entry name" value="PRK08641.1"/>
    <property type="match status" value="1"/>
</dbReference>
<dbReference type="NCBIfam" id="TIGR01811">
    <property type="entry name" value="sdhA_Bsu"/>
    <property type="match status" value="1"/>
</dbReference>
<dbReference type="PANTHER" id="PTHR11632">
    <property type="entry name" value="SUCCINATE DEHYDROGENASE 2 FLAVOPROTEIN SUBUNIT"/>
    <property type="match status" value="1"/>
</dbReference>
<dbReference type="PANTHER" id="PTHR11632:SF53">
    <property type="entry name" value="SUCCINATE DEHYDROGENASE FLAVOPROTEIN SUBUNIT"/>
    <property type="match status" value="1"/>
</dbReference>
<dbReference type="Pfam" id="PF00890">
    <property type="entry name" value="FAD_binding_2"/>
    <property type="match status" value="1"/>
</dbReference>
<dbReference type="Pfam" id="PF02910">
    <property type="entry name" value="Succ_DH_flav_C"/>
    <property type="match status" value="1"/>
</dbReference>
<dbReference type="PIRSF" id="PIRSF000171">
    <property type="entry name" value="SDHA_APRA_LASPO"/>
    <property type="match status" value="1"/>
</dbReference>
<dbReference type="PRINTS" id="PR00368">
    <property type="entry name" value="FADPNR"/>
</dbReference>
<dbReference type="PRINTS" id="PR00411">
    <property type="entry name" value="PNDRDTASEI"/>
</dbReference>
<dbReference type="SUPFAM" id="SSF51905">
    <property type="entry name" value="FAD/NAD(P)-binding domain"/>
    <property type="match status" value="1"/>
</dbReference>
<dbReference type="SUPFAM" id="SSF46977">
    <property type="entry name" value="Succinate dehydrogenase/fumarate reductase flavoprotein C-terminal domain"/>
    <property type="match status" value="1"/>
</dbReference>
<dbReference type="SUPFAM" id="SSF56425">
    <property type="entry name" value="Succinate dehydrogenase/fumarate reductase flavoprotein, catalytic domain"/>
    <property type="match status" value="1"/>
</dbReference>
<dbReference type="PROSITE" id="PS00504">
    <property type="entry name" value="FRD_SDH_FAD_BINDING"/>
    <property type="match status" value="1"/>
</dbReference>
<feature type="chain" id="PRO_0000158650" description="Succinate dehydrogenase flavoprotein subunit">
    <location>
        <begin position="1"/>
        <end position="586"/>
    </location>
</feature>
<feature type="active site" description="Proton acceptor" evidence="1">
    <location>
        <position position="285"/>
    </location>
</feature>
<feature type="binding site" evidence="1">
    <location>
        <begin position="10"/>
        <end position="15"/>
    </location>
    <ligand>
        <name>FAD</name>
        <dbReference type="ChEBI" id="CHEBI:57692"/>
    </ligand>
</feature>
<feature type="binding site" evidence="1">
    <location>
        <begin position="33"/>
        <end position="48"/>
    </location>
    <ligand>
        <name>FAD</name>
        <dbReference type="ChEBI" id="CHEBI:57692"/>
    </ligand>
</feature>
<feature type="binding site" evidence="1">
    <location>
        <position position="236"/>
    </location>
    <ligand>
        <name>substrate</name>
    </ligand>
</feature>
<feature type="binding site" evidence="1">
    <location>
        <position position="250"/>
    </location>
    <ligand>
        <name>substrate</name>
    </ligand>
</feature>
<feature type="binding site" evidence="1">
    <location>
        <position position="352"/>
    </location>
    <ligand>
        <name>substrate</name>
    </ligand>
</feature>
<feature type="binding site" evidence="1">
    <location>
        <position position="376"/>
    </location>
    <ligand>
        <name>FAD</name>
        <dbReference type="ChEBI" id="CHEBI:57692"/>
    </ligand>
</feature>
<feature type="binding site" evidence="1">
    <location>
        <position position="386"/>
    </location>
    <ligand>
        <name>substrate</name>
    </ligand>
</feature>
<feature type="binding site" evidence="1">
    <location>
        <begin position="391"/>
        <end position="392"/>
    </location>
    <ligand>
        <name>FAD</name>
        <dbReference type="ChEBI" id="CHEBI:57692"/>
    </ligand>
</feature>
<feature type="modified residue" description="Tele-8alpha-FAD histidine" evidence="1">
    <location>
        <position position="41"/>
    </location>
</feature>
<feature type="sequence variant" description="In a defective mutant.">
    <original>G</original>
    <variation>D</variation>
    <location>
        <position position="48"/>
    </location>
</feature>
<feature type="sequence conflict" description="In Ref. 1; AAA22746 and 2; CAA99547." evidence="3" ref="1 2">
    <original>V</original>
    <variation>L</variation>
    <location>
        <position position="82"/>
    </location>
</feature>
<feature type="sequence conflict" description="In Ref. 1; AAA22746 and 2; CAA99547." evidence="3" ref="1 2">
    <original>G</original>
    <variation>A</variation>
    <location>
        <position position="100"/>
    </location>
</feature>
<feature type="sequence conflict" description="In Ref. 1; AAA22746 and 2; CAA99547." evidence="3" ref="1 2">
    <original>GAN</original>
    <variation>ERT</variation>
    <location>
        <begin position="388"/>
        <end position="390"/>
    </location>
</feature>
<feature type="sequence conflict" description="In Ref. 1; AAA22746 and 2; CAA99547." evidence="3" ref="1 2">
    <original>S</original>
    <variation>I</variation>
    <location>
        <position position="441"/>
    </location>
</feature>
<protein>
    <recommendedName>
        <fullName>Succinate dehydrogenase flavoprotein subunit</fullName>
        <ecNumber evidence="1">1.3.5.1</ecNumber>
    </recommendedName>
</protein>
<name>SDHA_BACSU</name>
<comment type="catalytic activity">
    <reaction evidence="1">
        <text>a quinone + succinate = fumarate + a quinol</text>
        <dbReference type="Rhea" id="RHEA:40523"/>
        <dbReference type="ChEBI" id="CHEBI:24646"/>
        <dbReference type="ChEBI" id="CHEBI:29806"/>
        <dbReference type="ChEBI" id="CHEBI:30031"/>
        <dbReference type="ChEBI" id="CHEBI:132124"/>
        <dbReference type="EC" id="1.3.5.1"/>
    </reaction>
</comment>
<comment type="cofactor">
    <cofactor evidence="1">
        <name>FAD</name>
        <dbReference type="ChEBI" id="CHEBI:57692"/>
    </cofactor>
</comment>
<comment type="pathway">
    <text evidence="1">Carbohydrate metabolism; tricarboxylic acid cycle; fumarate from succinate (bacterial route): step 1/1.</text>
</comment>
<comment type="subunit">
    <text evidence="2">In B.subtilis succinate dehydrogenase forms part of an enzyme complex containing three subunits: a flavoprotein, an iron-sulfur protein and cytochrome b-558. Interacts with FloT (PubMed:23651456).</text>
</comment>
<comment type="subcellular location">
    <subcellularLocation>
        <location evidence="1 2">Cell membrane</location>
        <topology evidence="1">Peripheral membrane protein</topology>
        <orientation evidence="1">Cytoplasmic side</orientation>
    </subcellularLocation>
    <subcellularLocation>
        <location evidence="2">Membrane raft</location>
        <topology evidence="1">Peripheral membrane protein</topology>
    </subcellularLocation>
    <text evidence="2">Present in detergent-resistant membrane (DRM) fractions that may be equivalent to eukaryotic membrane rafts; these rafts include proteins involved in signaling, molecule trafficking and protein secretion.</text>
</comment>
<comment type="similarity">
    <text evidence="3">Belongs to the FAD-dependent oxidoreductase 2 family. FRD/SDH subfamily.</text>
</comment>
<reference key="1">
    <citation type="journal article" date="1987" name="J. Bacteriol.">
        <title>Nucleotide sequence encoding the flavoprotein and iron-sulfur protein subunits of the Bacillus subtilis PY79 succinate dehydrogenase complex.</title>
        <authorList>
            <person name="Phillips M.K."/>
            <person name="Hederstedt L."/>
            <person name="Hasnain S."/>
            <person name="Rutberg L."/>
            <person name="Guest J.R."/>
        </authorList>
    </citation>
    <scope>NUCLEOTIDE SEQUENCE [GENOMIC DNA]</scope>
    <source>
        <strain>168 / PY79</strain>
    </source>
</reference>
<reference key="2">
    <citation type="journal article" date="1996" name="Microbiology">
        <title>The dnaB-pheA (256 degrees-240 degrees) region of the Bacillus subtilis chromosome containing genes responsible for stress responses, the utilization of plant cell walls and primary metabolism.</title>
        <authorList>
            <person name="Wipat A."/>
            <person name="Carter N."/>
            <person name="Brignell C.S."/>
            <person name="Guy J.B."/>
            <person name="Piper K."/>
            <person name="Sanders J."/>
            <person name="Emmerson P.T."/>
            <person name="Harwood C.R."/>
        </authorList>
    </citation>
    <scope>NUCLEOTIDE SEQUENCE [GENOMIC DNA]</scope>
    <source>
        <strain>168</strain>
    </source>
</reference>
<reference key="3">
    <citation type="journal article" date="1997" name="Nature">
        <title>The complete genome sequence of the Gram-positive bacterium Bacillus subtilis.</title>
        <authorList>
            <person name="Kunst F."/>
            <person name="Ogasawara N."/>
            <person name="Moszer I."/>
            <person name="Albertini A.M."/>
            <person name="Alloni G."/>
            <person name="Azevedo V."/>
            <person name="Bertero M.G."/>
            <person name="Bessieres P."/>
            <person name="Bolotin A."/>
            <person name="Borchert S."/>
            <person name="Borriss R."/>
            <person name="Boursier L."/>
            <person name="Brans A."/>
            <person name="Braun M."/>
            <person name="Brignell S.C."/>
            <person name="Bron S."/>
            <person name="Brouillet S."/>
            <person name="Bruschi C.V."/>
            <person name="Caldwell B."/>
            <person name="Capuano V."/>
            <person name="Carter N.M."/>
            <person name="Choi S.-K."/>
            <person name="Codani J.-J."/>
            <person name="Connerton I.F."/>
            <person name="Cummings N.J."/>
            <person name="Daniel R.A."/>
            <person name="Denizot F."/>
            <person name="Devine K.M."/>
            <person name="Duesterhoeft A."/>
            <person name="Ehrlich S.D."/>
            <person name="Emmerson P.T."/>
            <person name="Entian K.-D."/>
            <person name="Errington J."/>
            <person name="Fabret C."/>
            <person name="Ferrari E."/>
            <person name="Foulger D."/>
            <person name="Fritz C."/>
            <person name="Fujita M."/>
            <person name="Fujita Y."/>
            <person name="Fuma S."/>
            <person name="Galizzi A."/>
            <person name="Galleron N."/>
            <person name="Ghim S.-Y."/>
            <person name="Glaser P."/>
            <person name="Goffeau A."/>
            <person name="Golightly E.J."/>
            <person name="Grandi G."/>
            <person name="Guiseppi G."/>
            <person name="Guy B.J."/>
            <person name="Haga K."/>
            <person name="Haiech J."/>
            <person name="Harwood C.R."/>
            <person name="Henaut A."/>
            <person name="Hilbert H."/>
            <person name="Holsappel S."/>
            <person name="Hosono S."/>
            <person name="Hullo M.-F."/>
            <person name="Itaya M."/>
            <person name="Jones L.-M."/>
            <person name="Joris B."/>
            <person name="Karamata D."/>
            <person name="Kasahara Y."/>
            <person name="Klaerr-Blanchard M."/>
            <person name="Klein C."/>
            <person name="Kobayashi Y."/>
            <person name="Koetter P."/>
            <person name="Koningstein G."/>
            <person name="Krogh S."/>
            <person name="Kumano M."/>
            <person name="Kurita K."/>
            <person name="Lapidus A."/>
            <person name="Lardinois S."/>
            <person name="Lauber J."/>
            <person name="Lazarevic V."/>
            <person name="Lee S.-M."/>
            <person name="Levine A."/>
            <person name="Liu H."/>
            <person name="Masuda S."/>
            <person name="Mauel C."/>
            <person name="Medigue C."/>
            <person name="Medina N."/>
            <person name="Mellado R.P."/>
            <person name="Mizuno M."/>
            <person name="Moestl D."/>
            <person name="Nakai S."/>
            <person name="Noback M."/>
            <person name="Noone D."/>
            <person name="O'Reilly M."/>
            <person name="Ogawa K."/>
            <person name="Ogiwara A."/>
            <person name="Oudega B."/>
            <person name="Park S.-H."/>
            <person name="Parro V."/>
            <person name="Pohl T.M."/>
            <person name="Portetelle D."/>
            <person name="Porwollik S."/>
            <person name="Prescott A.M."/>
            <person name="Presecan E."/>
            <person name="Pujic P."/>
            <person name="Purnelle B."/>
            <person name="Rapoport G."/>
            <person name="Rey M."/>
            <person name="Reynolds S."/>
            <person name="Rieger M."/>
            <person name="Rivolta C."/>
            <person name="Rocha E."/>
            <person name="Roche B."/>
            <person name="Rose M."/>
            <person name="Sadaie Y."/>
            <person name="Sato T."/>
            <person name="Scanlan E."/>
            <person name="Schleich S."/>
            <person name="Schroeter R."/>
            <person name="Scoffone F."/>
            <person name="Sekiguchi J."/>
            <person name="Sekowska A."/>
            <person name="Seror S.J."/>
            <person name="Serror P."/>
            <person name="Shin B.-S."/>
            <person name="Soldo B."/>
            <person name="Sorokin A."/>
            <person name="Tacconi E."/>
            <person name="Takagi T."/>
            <person name="Takahashi H."/>
            <person name="Takemaru K."/>
            <person name="Takeuchi M."/>
            <person name="Tamakoshi A."/>
            <person name="Tanaka T."/>
            <person name="Terpstra P."/>
            <person name="Tognoni A."/>
            <person name="Tosato V."/>
            <person name="Uchiyama S."/>
            <person name="Vandenbol M."/>
            <person name="Vannier F."/>
            <person name="Vassarotti A."/>
            <person name="Viari A."/>
            <person name="Wambutt R."/>
            <person name="Wedler E."/>
            <person name="Wedler H."/>
            <person name="Weitzenegger T."/>
            <person name="Winters P."/>
            <person name="Wipat A."/>
            <person name="Yamamoto H."/>
            <person name="Yamane K."/>
            <person name="Yasumoto K."/>
            <person name="Yata K."/>
            <person name="Yoshida K."/>
            <person name="Yoshikawa H.-F."/>
            <person name="Zumstein E."/>
            <person name="Yoshikawa H."/>
            <person name="Danchin A."/>
        </authorList>
    </citation>
    <scope>NUCLEOTIDE SEQUENCE [LARGE SCALE GENOMIC DNA]</scope>
    <source>
        <strain>168</strain>
    </source>
</reference>
<reference key="4">
    <citation type="journal article" date="2009" name="Microbiology">
        <title>From a consortium sequence to a unified sequence: the Bacillus subtilis 168 reference genome a decade later.</title>
        <authorList>
            <person name="Barbe V."/>
            <person name="Cruveiller S."/>
            <person name="Kunst F."/>
            <person name="Lenoble P."/>
            <person name="Meurice G."/>
            <person name="Sekowska A."/>
            <person name="Vallenet D."/>
            <person name="Wang T."/>
            <person name="Moszer I."/>
            <person name="Medigue C."/>
            <person name="Danchin A."/>
        </authorList>
    </citation>
    <scope>SEQUENCE REVISION TO 82; 100; 390 AND 441</scope>
</reference>
<reference key="5">
    <citation type="journal article" date="1986" name="J. Bacteriol.">
        <title>Nucleotide sequence of the gene for cytochrome b558 of the Bacillus subtilis succinate dehydrogenase complex.</title>
        <authorList>
            <person name="Magnusson K."/>
            <person name="Philips M.K."/>
            <person name="Guest J.R."/>
            <person name="Rutberg L."/>
        </authorList>
    </citation>
    <scope>NUCLEOTIDE SEQUENCE [GENOMIC DNA] OF 1-31</scope>
    <source>
        <strain>168 / PY79</strain>
    </source>
</reference>
<reference key="6">
    <citation type="journal article" date="1986" name="Biochemistry">
        <title>Bacillus subtilis mutant succinate dehydrogenase lacking covalently bound flavin: identification of the primary defect and studies on the iron-sulfur clusters in mutated and wild-type enzyme.</title>
        <authorList>
            <person name="Maguire J.J."/>
            <person name="Magnusson K."/>
            <person name="Hederstedt L."/>
        </authorList>
    </citation>
    <scope>MUTANT ASP-48</scope>
</reference>
<reference key="7">
    <citation type="journal article" date="2013" name="Mol. Microbiol.">
        <title>Flotillins functionally organize the bacterial membrane.</title>
        <authorList>
            <person name="Bach J.N."/>
            <person name="Bramkamp M."/>
        </authorList>
    </citation>
    <scope>INTERACTION WITH FLOT</scope>
    <scope>SUBCELLULAR LOCATION</scope>
    <source>
        <strain>168</strain>
    </source>
</reference>
<evidence type="ECO:0000250" key="1">
    <source>
        <dbReference type="UniProtKB" id="P0AC41"/>
    </source>
</evidence>
<evidence type="ECO:0000269" key="2">
    <source>
    </source>
</evidence>
<evidence type="ECO:0000305" key="3"/>
<keyword id="KW-1003">Cell membrane</keyword>
<keyword id="KW-0249">Electron transport</keyword>
<keyword id="KW-0274">FAD</keyword>
<keyword id="KW-0285">Flavoprotein</keyword>
<keyword id="KW-0472">Membrane</keyword>
<keyword id="KW-0560">Oxidoreductase</keyword>
<keyword id="KW-1185">Reference proteome</keyword>
<keyword id="KW-0813">Transport</keyword>
<keyword id="KW-0816">Tricarboxylic acid cycle</keyword>
<sequence length="586" mass="65152">MSQSSIIVVGGGLAGLMATIKAAESGMAVKLFSIVPVKRSHSVCAQGGINGAVNTKGEGDSPWEHFDDTVYGGDFLANQPPVKAMCEAAPSIIHLLDRMGVMFNRTPEGLLDFRRFGGTQHHRTAYAGATTGQQLLYALDEQVRRYEVAGLVTKYEGWEFLGAVLDDDRTCRGIVAQNLTNMQIESFRSDAVIMATGGPGIIFGKSTNSMINTGSAASIVYQQGAYYANGEFIQIHPTAIPGDDKLRLMSESARGEGGRVWTYKDGKPWYFLEEKYPAYGNLVPRDIATREIFDVCVNQKLGINGENMVYLDLSHKDPKELDIKLGGIIEIYEKFMGDDPRKLPMKIFPAVHYSMGGLWVDYDQMTNIPGLFAAGECDYSMHGGNRLGANSLLSAIYGGMVAGPNAVKYVNGLESSAEDMSSSLFDAHVKKEEEKWADIMSMDGTENAYVLHKELGEWMTANVTVVRHNDKLLKTDDKIQELMERFKKININDTTKWSNQGAMFTRQFSNMLQLARVITLGAYNRNESRGAHYKPDYPERNDDEWLKTTMAKHVSPYEAPEFEYQDVDVSLITPRKRDYSKKKVAK</sequence>
<organism>
    <name type="scientific">Bacillus subtilis (strain 168)</name>
    <dbReference type="NCBI Taxonomy" id="224308"/>
    <lineage>
        <taxon>Bacteria</taxon>
        <taxon>Bacillati</taxon>
        <taxon>Bacillota</taxon>
        <taxon>Bacilli</taxon>
        <taxon>Bacillales</taxon>
        <taxon>Bacillaceae</taxon>
        <taxon>Bacillus</taxon>
    </lineage>
</organism>
<gene>
    <name type="primary">sdhA</name>
    <name type="synonym">citF</name>
    <name type="ordered locus">BSU28440</name>
</gene>